<dbReference type="EMBL" id="BX284603">
    <property type="protein sequence ID" value="CCD63452.2"/>
    <property type="molecule type" value="Genomic_DNA"/>
</dbReference>
<dbReference type="RefSeq" id="NP_001367454.1">
    <property type="nucleotide sequence ID" value="NM_001379820.2"/>
</dbReference>
<dbReference type="RefSeq" id="NP_498751.1">
    <property type="nucleotide sequence ID" value="NM_066350.1"/>
</dbReference>
<dbReference type="SMR" id="P34430"/>
<dbReference type="BioGRID" id="50485">
    <property type="interactions" value="1"/>
</dbReference>
<dbReference type="FunCoup" id="P34430">
    <property type="interactions" value="38"/>
</dbReference>
<dbReference type="IntAct" id="P34430">
    <property type="interactions" value="1"/>
</dbReference>
<dbReference type="STRING" id="6239.F44B9.9.1"/>
<dbReference type="PaxDb" id="6239-F44B9.9"/>
<dbReference type="EnsemblMetazoa" id="F44B9.9.1">
    <property type="protein sequence ID" value="F44B9.9.1"/>
    <property type="gene ID" value="WBGene00018410"/>
</dbReference>
<dbReference type="GeneID" id="185726"/>
<dbReference type="UCSC" id="F44B9.9">
    <property type="organism name" value="c. elegans"/>
</dbReference>
<dbReference type="AGR" id="WB:WBGene00018410"/>
<dbReference type="WormBase" id="F44B9.9">
    <property type="protein sequence ID" value="CE54148"/>
    <property type="gene ID" value="WBGene00018410"/>
</dbReference>
<dbReference type="eggNOG" id="KOG0374">
    <property type="taxonomic scope" value="Eukaryota"/>
</dbReference>
<dbReference type="GeneTree" id="ENSGT00970000195978"/>
<dbReference type="HOGENOM" id="CLU_1138895_0_0_1"/>
<dbReference type="InParanoid" id="P34430"/>
<dbReference type="OrthoDB" id="5593063at2759"/>
<dbReference type="PhylomeDB" id="P34430"/>
<dbReference type="PRO" id="PR:P34430"/>
<dbReference type="Proteomes" id="UP000001940">
    <property type="component" value="Chromosome III"/>
</dbReference>
<dbReference type="Bgee" id="WBGene00018410">
    <property type="expression patterns" value="Expressed in pharyngeal muscle cell (C elegans) and 2 other cell types or tissues"/>
</dbReference>
<dbReference type="GO" id="GO:0005737">
    <property type="term" value="C:cytoplasm"/>
    <property type="evidence" value="ECO:0000318"/>
    <property type="project" value="GO_Central"/>
</dbReference>
<dbReference type="GO" id="GO:0005634">
    <property type="term" value="C:nucleus"/>
    <property type="evidence" value="ECO:0000318"/>
    <property type="project" value="GO_Central"/>
</dbReference>
<dbReference type="GO" id="GO:0004722">
    <property type="term" value="F:protein serine/threonine phosphatase activity"/>
    <property type="evidence" value="ECO:0000318"/>
    <property type="project" value="GO_Central"/>
</dbReference>
<dbReference type="CDD" id="cd00144">
    <property type="entry name" value="MPP_PPP_family"/>
    <property type="match status" value="1"/>
</dbReference>
<dbReference type="Gene3D" id="3.60.21.10">
    <property type="match status" value="2"/>
</dbReference>
<dbReference type="InterPro" id="IPR004843">
    <property type="entry name" value="Calcineurin-like_PHP_ApaH"/>
</dbReference>
<dbReference type="InterPro" id="IPR029052">
    <property type="entry name" value="Metallo-depent_PP-like"/>
</dbReference>
<dbReference type="InterPro" id="IPR050341">
    <property type="entry name" value="PP1_catalytic_subunit"/>
</dbReference>
<dbReference type="InterPro" id="IPR006186">
    <property type="entry name" value="Ser/Thr-sp_prot-phosphatase"/>
</dbReference>
<dbReference type="PANTHER" id="PTHR11668">
    <property type="entry name" value="SERINE/THREONINE PROTEIN PHOSPHATASE"/>
    <property type="match status" value="1"/>
</dbReference>
<dbReference type="PANTHER" id="PTHR11668:SF450">
    <property type="entry name" value="SERINE_THREONINE-PROTEIN PHOSPHATASE"/>
    <property type="match status" value="1"/>
</dbReference>
<dbReference type="Pfam" id="PF00149">
    <property type="entry name" value="Metallophos"/>
    <property type="match status" value="1"/>
</dbReference>
<dbReference type="PRINTS" id="PR00114">
    <property type="entry name" value="STPHPHTASE"/>
</dbReference>
<dbReference type="SMART" id="SM00156">
    <property type="entry name" value="PP2Ac"/>
    <property type="match status" value="1"/>
</dbReference>
<dbReference type="SUPFAM" id="SSF56300">
    <property type="entry name" value="Metallo-dependent phosphatases"/>
    <property type="match status" value="1"/>
</dbReference>
<dbReference type="PROSITE" id="PS00125">
    <property type="entry name" value="SER_THR_PHOSPHATASE"/>
    <property type="match status" value="1"/>
</dbReference>
<organism>
    <name type="scientific">Caenorhabditis elegans</name>
    <dbReference type="NCBI Taxonomy" id="6239"/>
    <lineage>
        <taxon>Eukaryota</taxon>
        <taxon>Metazoa</taxon>
        <taxon>Ecdysozoa</taxon>
        <taxon>Nematoda</taxon>
        <taxon>Chromadorea</taxon>
        <taxon>Rhabditida</taxon>
        <taxon>Rhabditina</taxon>
        <taxon>Rhabditomorpha</taxon>
        <taxon>Rhabditoidea</taxon>
        <taxon>Rhabditidae</taxon>
        <taxon>Peloderinae</taxon>
        <taxon>Caenorhabditis</taxon>
    </lineage>
</organism>
<reference key="1">
    <citation type="journal article" date="1994" name="Nature">
        <title>2.2 Mb of contiguous nucleotide sequence from chromosome III of C. elegans.</title>
        <authorList>
            <person name="Wilson R."/>
            <person name="Ainscough R."/>
            <person name="Anderson K."/>
            <person name="Baynes C."/>
            <person name="Berks M."/>
            <person name="Bonfield J."/>
            <person name="Burton J."/>
            <person name="Connell M."/>
            <person name="Copsey T."/>
            <person name="Cooper J."/>
            <person name="Coulson A."/>
            <person name="Craxton M."/>
            <person name="Dear S."/>
            <person name="Du Z."/>
            <person name="Durbin R."/>
            <person name="Favello A."/>
            <person name="Fraser A."/>
            <person name="Fulton L."/>
            <person name="Gardner A."/>
            <person name="Green P."/>
            <person name="Hawkins T."/>
            <person name="Hillier L."/>
            <person name="Jier M."/>
            <person name="Johnston L."/>
            <person name="Jones M."/>
            <person name="Kershaw J."/>
            <person name="Kirsten J."/>
            <person name="Laisster N."/>
            <person name="Latreille P."/>
            <person name="Lightning J."/>
            <person name="Lloyd C."/>
            <person name="Mortimore B."/>
            <person name="O'Callaghan M."/>
            <person name="Parsons J."/>
            <person name="Percy C."/>
            <person name="Rifken L."/>
            <person name="Roopra A."/>
            <person name="Saunders D."/>
            <person name="Shownkeen R."/>
            <person name="Sims M."/>
            <person name="Smaldon N."/>
            <person name="Smith A."/>
            <person name="Smith M."/>
            <person name="Sonnhammer E."/>
            <person name="Staden R."/>
            <person name="Sulston J."/>
            <person name="Thierry-Mieg J."/>
            <person name="Thomas K."/>
            <person name="Vaudin M."/>
            <person name="Vaughan K."/>
            <person name="Waterston R."/>
            <person name="Watson A."/>
            <person name="Weinstock L."/>
            <person name="Wilkinson-Sproat J."/>
            <person name="Wohldman P."/>
        </authorList>
    </citation>
    <scope>NUCLEOTIDE SEQUENCE [LARGE SCALE GENOMIC DNA]</scope>
    <source>
        <strain>Bristol N2</strain>
    </source>
</reference>
<reference key="2">
    <citation type="journal article" date="1998" name="Science">
        <title>Genome sequence of the nematode C. elegans: a platform for investigating biology.</title>
        <authorList>
            <consortium name="The C. elegans sequencing consortium"/>
        </authorList>
    </citation>
    <scope>NUCLEOTIDE SEQUENCE [LARGE SCALE GENOMIC DNA]</scope>
    <source>
        <strain>Bristol N2</strain>
    </source>
</reference>
<accession>P34430</accession>
<name>YL39_CAEEL</name>
<evidence type="ECO:0000312" key="1">
    <source>
        <dbReference type="WormBase" id="F44B9.9"/>
    </source>
</evidence>
<feature type="chain" id="PRO_0000065342" description="Uncharacterized protein F44B9.9">
    <location>
        <begin position="1"/>
        <end position="254"/>
    </location>
</feature>
<gene>
    <name evidence="1" type="ORF">F44B9.9</name>
</gene>
<keyword id="KW-1185">Reference proteome</keyword>
<proteinExistence type="predicted"/>
<sequence length="254" mass="29029">MRTYSKTELFCLLDMVIELFKKEKTLAEISPPVTIVGDIHGQFEDLVRLLNTRNSSENAKSKPIYGFSTKKWVFLGDYVDRGYKSLDCICLVFSLKICFPKQYILLRGNHETRAINFRYGFRVCSVVVLKIPAKPSFIRNNKRGLSVCFNEAAVNETCRLLNISLIVRGHQMMPAGFKFFADRKLCTIFSAPRYMNEIDNSGAVMKVASNGKISISIMKNPNFAMKMFLLQMKSHNSLDHRNMRLSKNSNNLPS</sequence>
<protein>
    <recommendedName>
        <fullName>Uncharacterized protein F44B9.9</fullName>
    </recommendedName>
</protein>